<name>TRBJ_SINFN</name>
<reference key="1">
    <citation type="journal article" date="1997" name="Nature">
        <title>Molecular basis of symbiosis between Rhizobium and legumes.</title>
        <authorList>
            <person name="Freiberg C.A."/>
            <person name="Fellay R."/>
            <person name="Bairoch A."/>
            <person name="Broughton W.J."/>
            <person name="Rosenthal A."/>
            <person name="Perret X."/>
        </authorList>
    </citation>
    <scope>NUCLEOTIDE SEQUENCE [LARGE SCALE GENOMIC DNA]</scope>
    <source>
        <strain>NBRC 101917 / NGR234</strain>
    </source>
</reference>
<reference key="2">
    <citation type="journal article" date="2009" name="Appl. Environ. Microbiol.">
        <title>Rhizobium sp. strain NGR234 possesses a remarkable number of secretion systems.</title>
        <authorList>
            <person name="Schmeisser C."/>
            <person name="Liesegang H."/>
            <person name="Krysciak D."/>
            <person name="Bakkou N."/>
            <person name="Le Quere A."/>
            <person name="Wollherr A."/>
            <person name="Heinemeyer I."/>
            <person name="Morgenstern B."/>
            <person name="Pommerening-Roeser A."/>
            <person name="Flores M."/>
            <person name="Palacios R."/>
            <person name="Brenner S."/>
            <person name="Gottschalk G."/>
            <person name="Schmitz R.A."/>
            <person name="Broughton W.J."/>
            <person name="Perret X."/>
            <person name="Strittmatter A.W."/>
            <person name="Streit W.R."/>
        </authorList>
    </citation>
    <scope>NUCLEOTIDE SEQUENCE [LARGE SCALE GENOMIC DNA]</scope>
    <source>
        <strain>NBRC 101917 / NGR234</strain>
    </source>
</reference>
<feature type="chain" id="PRO_0000065619" description="Probable conjugal transfer protein TrbJ">
    <location>
        <begin position="1"/>
        <end position="267"/>
    </location>
</feature>
<proteinExistence type="predicted"/>
<comment type="similarity">
    <text evidence="1">To A.tumefaciens Ti plasmid TrbJ.</text>
</comment>
<evidence type="ECO:0000305" key="1"/>
<accession>P55400</accession>
<protein>
    <recommendedName>
        <fullName>Probable conjugal transfer protein TrbJ</fullName>
    </recommendedName>
</protein>
<geneLocation type="plasmid">
    <name>sym pNGR234a</name>
</geneLocation>
<dbReference type="EMBL" id="U00090">
    <property type="protein sequence ID" value="AAB92433.1"/>
    <property type="molecule type" value="Genomic_DNA"/>
</dbReference>
<dbReference type="RefSeq" id="NP_443810.1">
    <property type="nucleotide sequence ID" value="NC_000914.2"/>
</dbReference>
<dbReference type="RefSeq" id="WP_010875426.1">
    <property type="nucleotide sequence ID" value="NC_000914.2"/>
</dbReference>
<dbReference type="SMR" id="P55400"/>
<dbReference type="KEGG" id="rhi:NGR_a04160"/>
<dbReference type="PATRIC" id="fig|394.7.peg.437"/>
<dbReference type="eggNOG" id="COG5314">
    <property type="taxonomic scope" value="Bacteria"/>
</dbReference>
<dbReference type="HOGENOM" id="CLU_065326_0_1_5"/>
<dbReference type="OrthoDB" id="8217233at2"/>
<dbReference type="Proteomes" id="UP000001054">
    <property type="component" value="Plasmid pNGR234a"/>
</dbReference>
<dbReference type="InterPro" id="IPR014147">
    <property type="entry name" value="T4SS_TrbJ"/>
</dbReference>
<dbReference type="NCBIfam" id="NF010416">
    <property type="entry name" value="PRK13842.1"/>
    <property type="match status" value="1"/>
</dbReference>
<dbReference type="NCBIfam" id="TIGR02780">
    <property type="entry name" value="TrbJ_Ti"/>
    <property type="match status" value="1"/>
</dbReference>
<sequence length="267" mass="29579">MPRRCSMSNNLLAGLAVVAVTVGTGEPADAGTATGVATEWTQVLNNGELVALVGKSNEQIQNQLTQISQFAQQIETQLNIYQNLLQNTATLPSHMWGQVERDLNRLRSIVDQGQSIAFSMGNADHVLQQRFQSYATLKTNLPRNETFSSTYQAWSDTNRDTIASTLNAASLTADQFDSEETTMSSLRSMSETADGQMKALQVGHEIAAQQVGQMQKLRGLVSQQMTMMGTWLQTEQTDKDLAQARREKFFNADVKSIPEGQKMEPRW</sequence>
<keyword id="KW-0184">Conjugation</keyword>
<keyword id="KW-0614">Plasmid</keyword>
<keyword id="KW-1185">Reference proteome</keyword>
<gene>
    <name type="primary">trbJ</name>
    <name type="ordered locus">NGR_a04160</name>
    <name type="ORF">y4dA</name>
</gene>
<organism>
    <name type="scientific">Sinorhizobium fredii (strain NBRC 101917 / NGR234)</name>
    <dbReference type="NCBI Taxonomy" id="394"/>
    <lineage>
        <taxon>Bacteria</taxon>
        <taxon>Pseudomonadati</taxon>
        <taxon>Pseudomonadota</taxon>
        <taxon>Alphaproteobacteria</taxon>
        <taxon>Hyphomicrobiales</taxon>
        <taxon>Rhizobiaceae</taxon>
        <taxon>Sinorhizobium/Ensifer group</taxon>
        <taxon>Sinorhizobium</taxon>
    </lineage>
</organism>